<sequence length="1162" mass="129367">MTDVNCLTSEHIAPTTTTASPPGTPSKNAATDPVEPTSPFVLRAPPSAKSKLILQNMEEVLNSVKQKHREKHKRKREEKRRAALMEDQKSTTEEVKANAKEKPQPLREKSSQENGLKNGRRRSSPLKSSTPVADNQSIMKHFAKAGKPENVGVSPVSTAKPKPTTNVFEFMMNARNRSLGVNEGGAESPADQEIGSEAATPTTKRKLLLQEWNERKGGAKRRLADEARGEFIELQMEQRAKRLRKMLTKTDAKEVTAPSSAPTDPTVKRLRGRPRSRRISSMDAQNQIVESKPPVVKAKDQDPGTEELLSKLSSPTKKRDSLLGYFPKVESPKELAEKVIIAIETPPMETPKRRTLRRKSQQETPIVAESTPSSRPRRSCVGKARYDYDLETSPGKQQKAKPQKADESVEIIDLDNSNPAATPKKLAPLFVRQLPKPSPDPSVLKARQAFLQSGVPDKIRQEQIRQKNFDQMYEDSYEVFPRLAHIGCESFGSKNGPLDIPFALRAEEEYSEVTKALPANKRRAKASSITSCLPADFTSSKTLNKFNYATLPQLENKRGFVKLWKNDFDRFPTFKCYNQMREKYRHFSAIDSAQDTQQMGESLVVTRRTRRSMEQNMAQNEEEAKPPPSAPNGELLFTEKYKPLLFEQVLVNLTPVQELREFLSSWSGNGGSNRNSQGMDDTFDMSNDSASMGSSSNTMVLVGPSSSGKTNAVFTLANDMNFNVLEINAGMKRTGKKLIQELQEATQSHQIRKDGKAGGGSSQQLLQKLQKSGLKAKAAAVEPPSEVRKSLILIEDADILFDNLDAGFTDAIYTLAASSKRPVIVVATDPNCAHLQRLMQQNIIHFQAPNALNISRFLAVLSLMENCPIELDELISVYLYNQQNLRKTLMELQFYIQSGGDSTRDRTGGGIKSPTKTSNSRLATVDGSRIHQRFFEFFTSPQNVQYRIPFPVDFSLLRLNLPDLMASSAMLKEQQAAGGGSRTAAKRKSRSPKKAWLSSATGQKSDGHSSSLATLASFYDNISVASLMDSDCSDRLQWHLSEEIGHLLVEQALQTGLATKECPYNLFDKPVQRFSICQHLGNGVLRSDSAKSLDFEPALRSICRSEKERAGLERKSSRFYHYLRNHTVNVTSFTTDYFDTACSTFQSAAPSSEPTMEAEPKD</sequence>
<keyword id="KW-0025">Alternative splicing</keyword>
<keyword id="KW-0067">ATP-binding</keyword>
<keyword id="KW-0547">Nucleotide-binding</keyword>
<keyword id="KW-0539">Nucleus</keyword>
<keyword id="KW-1185">Reference proteome</keyword>
<reference evidence="8" key="1">
    <citation type="journal article" date="2000" name="Science">
        <title>The genome sequence of Drosophila melanogaster.</title>
        <authorList>
            <person name="Adams M.D."/>
            <person name="Celniker S.E."/>
            <person name="Holt R.A."/>
            <person name="Evans C.A."/>
            <person name="Gocayne J.D."/>
            <person name="Amanatides P.G."/>
            <person name="Scherer S.E."/>
            <person name="Li P.W."/>
            <person name="Hoskins R.A."/>
            <person name="Galle R.F."/>
            <person name="George R.A."/>
            <person name="Lewis S.E."/>
            <person name="Richards S."/>
            <person name="Ashburner M."/>
            <person name="Henderson S.N."/>
            <person name="Sutton G.G."/>
            <person name="Wortman J.R."/>
            <person name="Yandell M.D."/>
            <person name="Zhang Q."/>
            <person name="Chen L.X."/>
            <person name="Brandon R.C."/>
            <person name="Rogers Y.-H.C."/>
            <person name="Blazej R.G."/>
            <person name="Champe M."/>
            <person name="Pfeiffer B.D."/>
            <person name="Wan K.H."/>
            <person name="Doyle C."/>
            <person name="Baxter E.G."/>
            <person name="Helt G."/>
            <person name="Nelson C.R."/>
            <person name="Miklos G.L.G."/>
            <person name="Abril J.F."/>
            <person name="Agbayani A."/>
            <person name="An H.-J."/>
            <person name="Andrews-Pfannkoch C."/>
            <person name="Baldwin D."/>
            <person name="Ballew R.M."/>
            <person name="Basu A."/>
            <person name="Baxendale J."/>
            <person name="Bayraktaroglu L."/>
            <person name="Beasley E.M."/>
            <person name="Beeson K.Y."/>
            <person name="Benos P.V."/>
            <person name="Berman B.P."/>
            <person name="Bhandari D."/>
            <person name="Bolshakov S."/>
            <person name="Borkova D."/>
            <person name="Botchan M.R."/>
            <person name="Bouck J."/>
            <person name="Brokstein P."/>
            <person name="Brottier P."/>
            <person name="Burtis K.C."/>
            <person name="Busam D.A."/>
            <person name="Butler H."/>
            <person name="Cadieu E."/>
            <person name="Center A."/>
            <person name="Chandra I."/>
            <person name="Cherry J.M."/>
            <person name="Cawley S."/>
            <person name="Dahlke C."/>
            <person name="Davenport L.B."/>
            <person name="Davies P."/>
            <person name="de Pablos B."/>
            <person name="Delcher A."/>
            <person name="Deng Z."/>
            <person name="Mays A.D."/>
            <person name="Dew I."/>
            <person name="Dietz S.M."/>
            <person name="Dodson K."/>
            <person name="Doup L.E."/>
            <person name="Downes M."/>
            <person name="Dugan-Rocha S."/>
            <person name="Dunkov B.C."/>
            <person name="Dunn P."/>
            <person name="Durbin K.J."/>
            <person name="Evangelista C.C."/>
            <person name="Ferraz C."/>
            <person name="Ferriera S."/>
            <person name="Fleischmann W."/>
            <person name="Fosler C."/>
            <person name="Gabrielian A.E."/>
            <person name="Garg N.S."/>
            <person name="Gelbart W.M."/>
            <person name="Glasser K."/>
            <person name="Glodek A."/>
            <person name="Gong F."/>
            <person name="Gorrell J.H."/>
            <person name="Gu Z."/>
            <person name="Guan P."/>
            <person name="Harris M."/>
            <person name="Harris N.L."/>
            <person name="Harvey D.A."/>
            <person name="Heiman T.J."/>
            <person name="Hernandez J.R."/>
            <person name="Houck J."/>
            <person name="Hostin D."/>
            <person name="Houston K.A."/>
            <person name="Howland T.J."/>
            <person name="Wei M.-H."/>
            <person name="Ibegwam C."/>
            <person name="Jalali M."/>
            <person name="Kalush F."/>
            <person name="Karpen G.H."/>
            <person name="Ke Z."/>
            <person name="Kennison J.A."/>
            <person name="Ketchum K.A."/>
            <person name="Kimmel B.E."/>
            <person name="Kodira C.D."/>
            <person name="Kraft C.L."/>
            <person name="Kravitz S."/>
            <person name="Kulp D."/>
            <person name="Lai Z."/>
            <person name="Lasko P."/>
            <person name="Lei Y."/>
            <person name="Levitsky A.A."/>
            <person name="Li J.H."/>
            <person name="Li Z."/>
            <person name="Liang Y."/>
            <person name="Lin X."/>
            <person name="Liu X."/>
            <person name="Mattei B."/>
            <person name="McIntosh T.C."/>
            <person name="McLeod M.P."/>
            <person name="McPherson D."/>
            <person name="Merkulov G."/>
            <person name="Milshina N.V."/>
            <person name="Mobarry C."/>
            <person name="Morris J."/>
            <person name="Moshrefi A."/>
            <person name="Mount S.M."/>
            <person name="Moy M."/>
            <person name="Murphy B."/>
            <person name="Murphy L."/>
            <person name="Muzny D.M."/>
            <person name="Nelson D.L."/>
            <person name="Nelson D.R."/>
            <person name="Nelson K.A."/>
            <person name="Nixon K."/>
            <person name="Nusskern D.R."/>
            <person name="Pacleb J.M."/>
            <person name="Palazzolo M."/>
            <person name="Pittman G.S."/>
            <person name="Pan S."/>
            <person name="Pollard J."/>
            <person name="Puri V."/>
            <person name="Reese M.G."/>
            <person name="Reinert K."/>
            <person name="Remington K."/>
            <person name="Saunders R.D.C."/>
            <person name="Scheeler F."/>
            <person name="Shen H."/>
            <person name="Shue B.C."/>
            <person name="Siden-Kiamos I."/>
            <person name="Simpson M."/>
            <person name="Skupski M.P."/>
            <person name="Smith T.J."/>
            <person name="Spier E."/>
            <person name="Spradling A.C."/>
            <person name="Stapleton M."/>
            <person name="Strong R."/>
            <person name="Sun E."/>
            <person name="Svirskas R."/>
            <person name="Tector C."/>
            <person name="Turner R."/>
            <person name="Venter E."/>
            <person name="Wang A.H."/>
            <person name="Wang X."/>
            <person name="Wang Z.-Y."/>
            <person name="Wassarman D.A."/>
            <person name="Weinstock G.M."/>
            <person name="Weissenbach J."/>
            <person name="Williams S.M."/>
            <person name="Woodage T."/>
            <person name="Worley K.C."/>
            <person name="Wu D."/>
            <person name="Yang S."/>
            <person name="Yao Q.A."/>
            <person name="Ye J."/>
            <person name="Yeh R.-F."/>
            <person name="Zaveri J.S."/>
            <person name="Zhan M."/>
            <person name="Zhang G."/>
            <person name="Zhao Q."/>
            <person name="Zheng L."/>
            <person name="Zheng X.H."/>
            <person name="Zhong F.N."/>
            <person name="Zhong W."/>
            <person name="Zhou X."/>
            <person name="Zhu S.C."/>
            <person name="Zhu X."/>
            <person name="Smith H.O."/>
            <person name="Gibbs R.A."/>
            <person name="Myers E.W."/>
            <person name="Rubin G.M."/>
            <person name="Venter J.C."/>
        </authorList>
    </citation>
    <scope>NUCLEOTIDE SEQUENCE [LARGE SCALE GENOMIC DNA]</scope>
    <source>
        <strain evidence="8">Berkeley</strain>
    </source>
</reference>
<reference evidence="8" key="2">
    <citation type="journal article" date="2002" name="Genome Biol.">
        <title>Annotation of the Drosophila melanogaster euchromatic genome: a systematic review.</title>
        <authorList>
            <person name="Misra S."/>
            <person name="Crosby M.A."/>
            <person name="Mungall C.J."/>
            <person name="Matthews B.B."/>
            <person name="Campbell K.S."/>
            <person name="Hradecky P."/>
            <person name="Huang Y."/>
            <person name="Kaminker J.S."/>
            <person name="Millburn G.H."/>
            <person name="Prochnik S.E."/>
            <person name="Smith C.D."/>
            <person name="Tupy J.L."/>
            <person name="Whitfield E.J."/>
            <person name="Bayraktaroglu L."/>
            <person name="Berman B.P."/>
            <person name="Bettencourt B.R."/>
            <person name="Celniker S.E."/>
            <person name="de Grey A.D.N.J."/>
            <person name="Drysdale R.A."/>
            <person name="Harris N.L."/>
            <person name="Richter J."/>
            <person name="Russo S."/>
            <person name="Schroeder A.J."/>
            <person name="Shu S.Q."/>
            <person name="Stapleton M."/>
            <person name="Yamada C."/>
            <person name="Ashburner M."/>
            <person name="Gelbart W.M."/>
            <person name="Rubin G.M."/>
            <person name="Lewis S.E."/>
        </authorList>
    </citation>
    <scope>GENOME REANNOTATION</scope>
    <source>
        <strain evidence="8">Berkeley</strain>
    </source>
</reference>
<reference evidence="6" key="3">
    <citation type="journal article" date="2002" name="Genome Biol.">
        <title>A Drosophila full-length cDNA resource.</title>
        <authorList>
            <person name="Stapleton M."/>
            <person name="Carlson J.W."/>
            <person name="Brokstein P."/>
            <person name="Yu C."/>
            <person name="Champe M."/>
            <person name="George R.A."/>
            <person name="Guarin H."/>
            <person name="Kronmiller B."/>
            <person name="Pacleb J.M."/>
            <person name="Park S."/>
            <person name="Wan K.H."/>
            <person name="Rubin G.M."/>
            <person name="Celniker S.E."/>
        </authorList>
    </citation>
    <scope>NUCLEOTIDE SEQUENCE [LARGE SCALE MRNA]</scope>
    <source>
        <strain evidence="6">Berkeley</strain>
        <tissue evidence="6">Ovary</tissue>
    </source>
</reference>
<reference evidence="5" key="4">
    <citation type="journal article" date="2016" name="Genes Dev.">
        <title>The Enok acetyltransferase complex interacts with Elg1 and negatively regulates PCNA unloading to promote the G1/S transition.</title>
        <authorList>
            <person name="Huang F."/>
            <person name="Saraf A."/>
            <person name="Florens L."/>
            <person name="Kusch T."/>
            <person name="Swanson S.K."/>
            <person name="Szerszen L.T."/>
            <person name="Li G."/>
            <person name="Dutta A."/>
            <person name="Washburn M.P."/>
            <person name="Abmayr S.M."/>
            <person name="Workman J.L."/>
        </authorList>
    </citation>
    <scope>FUNCTION</scope>
    <scope>IDENTIFICATION IN THE ELG1 RFC-LIKE COMPLEX</scope>
    <scope>INTERACTION WITH THE ENOK COMPLEX</scope>
    <scope>INTERACTION WITH BR140</scope>
    <scope>SUBCELLULAR LOCATION</scope>
    <scope>TISSUE SPECIFICITY</scope>
    <scope>DISRUPTION PHENOTYPE</scope>
</reference>
<gene>
    <name evidence="7" type="primary">elg1</name>
    <name evidence="7" type="ORF">CG16838</name>
</gene>
<name>ELG1_DROME</name>
<comment type="function">
    <text evidence="1 4">Has an important role in DNA replication and in maintaining genome integrity during replication stress (By similarity). Promotes PCNA deubiquitination (By similarity). As component of the Elg1 RFC-like complex, regulates the functions of the DNA polymerase processivity factor PCNA by unloading it from DNA after replication during the S phase of the cell cycle (PubMed:27198229). The PCNA-unloading might be regulated via interaction with the Enok acetyltransferase complex (PubMed:27198229). Might have a role in restarting of stalled/regressed replication forks during replication stress (By similarity). In the ovaries, has a role in nurse cell endoreplication (PubMed:27198229).</text>
</comment>
<comment type="subunit">
    <text evidence="4">Component of a heteropentameric Elg1 RFC-like complex composed of one large subunit (elg1) and four small subunits (RfC4, RfC38, CG8142 and RfC3) (PubMed:27198229). As part of the complex, might interact with the Enok complex, composed of enok, Br140, Eaf6 and Ing5 (PubMed:27198229). Within the Enok complex, interacts directly with Br140 (PubMed:27198229).</text>
</comment>
<comment type="subcellular location">
    <subcellularLocation>
        <location evidence="4">Nucleus</location>
    </subcellularLocation>
</comment>
<comment type="alternative products">
    <event type="alternative splicing"/>
    <isoform>
        <id>Q86BP6-1</id>
        <name evidence="7">C</name>
        <sequence type="displayed"/>
    </isoform>
    <isoform>
        <id>Q86BP6-2</id>
        <name evidence="7">D</name>
        <name evidence="7">E</name>
        <sequence type="described" ref="VSP_061537"/>
    </isoform>
</comment>
<comment type="tissue specificity">
    <text evidence="4">Expressed at higher levels in the germline nurse cells than in the somatic follicle cells.</text>
</comment>
<comment type="disruption phenotype">
    <text evidence="4">RNAi-mediated knockdown in the ovaries, results in lower DNA content in the nurse cells and defective development of egg chambers (PubMed:27198229). Simultaneous knockdown of elg1 and enok, results in relatively bigger and higher DNA content than single elg1 knockdown (PubMed:27198229). Further, egg chambers in ~25% of the ovarioles are able to develop beyond stage 9 with morphologically normal nurse cells (PubMed:27198229).</text>
</comment>
<comment type="similarity">
    <text evidence="5">Belongs to the ELG1 family.</text>
</comment>
<evidence type="ECO:0000250" key="1">
    <source>
        <dbReference type="UniProtKB" id="Q96QE3"/>
    </source>
</evidence>
<evidence type="ECO:0000255" key="2">
    <source>
        <dbReference type="PROSITE-ProRule" id="PRU00499"/>
    </source>
</evidence>
<evidence type="ECO:0000256" key="3">
    <source>
        <dbReference type="SAM" id="MobiDB-lite"/>
    </source>
</evidence>
<evidence type="ECO:0000269" key="4">
    <source>
    </source>
</evidence>
<evidence type="ECO:0000305" key="5"/>
<evidence type="ECO:0000312" key="6">
    <source>
        <dbReference type="EMBL" id="AAM49842.1"/>
    </source>
</evidence>
<evidence type="ECO:0000312" key="7">
    <source>
        <dbReference type="FlyBase" id="FBgn0036574"/>
    </source>
</evidence>
<evidence type="ECO:0000312" key="8">
    <source>
        <dbReference type="Proteomes" id="UP000000803"/>
    </source>
</evidence>
<feature type="chain" id="PRO_0000455976" description="Enhanced level of genomic instability 1" evidence="5">
    <location>
        <begin position="1"/>
        <end position="1162"/>
    </location>
</feature>
<feature type="region of interest" description="Disordered" evidence="3">
    <location>
        <begin position="1"/>
        <end position="136"/>
    </location>
</feature>
<feature type="region of interest" description="Disordered" evidence="3">
    <location>
        <begin position="144"/>
        <end position="163"/>
    </location>
</feature>
<feature type="region of interest" description="Disordered" evidence="3">
    <location>
        <begin position="179"/>
        <end position="202"/>
    </location>
</feature>
<feature type="region of interest" description="Disordered" evidence="3">
    <location>
        <begin position="249"/>
        <end position="319"/>
    </location>
</feature>
<feature type="region of interest" description="Disordered" evidence="3">
    <location>
        <begin position="348"/>
        <end position="380"/>
    </location>
</feature>
<feature type="region of interest" description="Disordered" evidence="3">
    <location>
        <begin position="611"/>
        <end position="634"/>
    </location>
</feature>
<feature type="region of interest" description="Disordered" evidence="3">
    <location>
        <begin position="666"/>
        <end position="697"/>
    </location>
</feature>
<feature type="region of interest" description="Disordered" evidence="3">
    <location>
        <begin position="900"/>
        <end position="923"/>
    </location>
</feature>
<feature type="region of interest" description="Disordered" evidence="3">
    <location>
        <begin position="975"/>
        <end position="1008"/>
    </location>
</feature>
<feature type="compositionally biased region" description="Basic residues" evidence="3">
    <location>
        <begin position="65"/>
        <end position="78"/>
    </location>
</feature>
<feature type="compositionally biased region" description="Basic and acidic residues" evidence="3">
    <location>
        <begin position="79"/>
        <end position="111"/>
    </location>
</feature>
<feature type="compositionally biased region" description="Polar residues" evidence="3">
    <location>
        <begin position="125"/>
        <end position="136"/>
    </location>
</feature>
<feature type="compositionally biased region" description="Basic residues" evidence="3">
    <location>
        <begin position="268"/>
        <end position="278"/>
    </location>
</feature>
<feature type="compositionally biased region" description="Low complexity" evidence="3">
    <location>
        <begin position="666"/>
        <end position="676"/>
    </location>
</feature>
<feature type="compositionally biased region" description="Low complexity" evidence="3">
    <location>
        <begin position="684"/>
        <end position="697"/>
    </location>
</feature>
<feature type="compositionally biased region" description="Basic residues" evidence="3">
    <location>
        <begin position="984"/>
        <end position="993"/>
    </location>
</feature>
<feature type="compositionally biased region" description="Polar residues" evidence="3">
    <location>
        <begin position="998"/>
        <end position="1008"/>
    </location>
</feature>
<feature type="binding site" evidence="2">
    <location>
        <begin position="703"/>
        <end position="710"/>
    </location>
    <ligand>
        <name>ATP</name>
        <dbReference type="ChEBI" id="CHEBI:30616"/>
    </ligand>
</feature>
<feature type="splice variant" id="VSP_061537" description="In isoform D." evidence="5">
    <location>
        <begin position="1"/>
        <end position="56"/>
    </location>
</feature>
<feature type="sequence conflict" description="In Ref. 3; AAM49842." evidence="5" ref="3">
    <original>APSSA</original>
    <variation>VPSSS</variation>
    <location>
        <begin position="257"/>
        <end position="261"/>
    </location>
</feature>
<feature type="sequence conflict" description="In Ref. 3; AAM49842." evidence="5" ref="3">
    <original>L</original>
    <variation>F</variation>
    <location>
        <position position="308"/>
    </location>
</feature>
<feature type="sequence conflict" description="In Ref. 3; AAM49842." evidence="5" ref="3">
    <original>N</original>
    <variation>S</variation>
    <location>
        <position position="495"/>
    </location>
</feature>
<feature type="sequence conflict" description="In Ref. 3; AAM49842." evidence="5" ref="3">
    <original>A</original>
    <variation>S</variation>
    <location>
        <position position="524"/>
    </location>
</feature>
<proteinExistence type="evidence at protein level"/>
<dbReference type="EMBL" id="AE014296">
    <property type="protein sequence ID" value="AAF49530.2"/>
    <property type="molecule type" value="Genomic_DNA"/>
</dbReference>
<dbReference type="EMBL" id="AE014296">
    <property type="protein sequence ID" value="AAN11762.2"/>
    <property type="molecule type" value="Genomic_DNA"/>
</dbReference>
<dbReference type="EMBL" id="AE014296">
    <property type="protein sequence ID" value="AFH04460.1"/>
    <property type="molecule type" value="Genomic_DNA"/>
</dbReference>
<dbReference type="EMBL" id="AY118473">
    <property type="protein sequence ID" value="AAM49842.1"/>
    <property type="molecule type" value="mRNA"/>
</dbReference>
<dbReference type="RefSeq" id="NP_001246789.1">
    <molecule id="Q86BP6-2"/>
    <property type="nucleotide sequence ID" value="NM_001259860.2"/>
</dbReference>
<dbReference type="RefSeq" id="NP_996102.1">
    <molecule id="Q86BP6-2"/>
    <property type="nucleotide sequence ID" value="NM_206380.2"/>
</dbReference>
<dbReference type="RefSeq" id="NP_996103.1">
    <molecule id="Q86BP6-1"/>
    <property type="nucleotide sequence ID" value="NM_206381.1"/>
</dbReference>
<dbReference type="ComplexPortal" id="CPX-2441">
    <property type="entry name" value="Elg1-RFC-like complex"/>
</dbReference>
<dbReference type="FunCoup" id="Q86BP6">
    <property type="interactions" value="218"/>
</dbReference>
<dbReference type="IntAct" id="Q86BP6">
    <property type="interactions" value="5"/>
</dbReference>
<dbReference type="STRING" id="7227.FBpp0088654"/>
<dbReference type="GlyGen" id="Q86BP6">
    <property type="glycosylation" value="3 sites"/>
</dbReference>
<dbReference type="PaxDb" id="7227-FBpp0088654"/>
<dbReference type="EnsemblMetazoa" id="FBtr0089713">
    <molecule id="Q86BP6-1"/>
    <property type="protein sequence ID" value="FBpp0088654"/>
    <property type="gene ID" value="FBgn0036574"/>
</dbReference>
<dbReference type="EnsemblMetazoa" id="FBtr0089714">
    <molecule id="Q86BP6-2"/>
    <property type="protein sequence ID" value="FBpp0088655"/>
    <property type="gene ID" value="FBgn0036574"/>
</dbReference>
<dbReference type="EnsemblMetazoa" id="FBtr0307518">
    <molecule id="Q86BP6-2"/>
    <property type="protein sequence ID" value="FBpp0300173"/>
    <property type="gene ID" value="FBgn0036574"/>
</dbReference>
<dbReference type="GeneID" id="39770"/>
<dbReference type="KEGG" id="dme:Dmel_CG16838"/>
<dbReference type="UCSC" id="CG16838-RC">
    <molecule id="Q86BP6-1"/>
    <property type="organism name" value="d. melanogaster"/>
</dbReference>
<dbReference type="UCSC" id="CG16838-RD">
    <property type="organism name" value="d. melanogaster"/>
</dbReference>
<dbReference type="AGR" id="FB:FBgn0036574"/>
<dbReference type="CTD" id="39770"/>
<dbReference type="FlyBase" id="FBgn0036574">
    <property type="gene designation" value="elg1"/>
</dbReference>
<dbReference type="VEuPathDB" id="VectorBase:FBgn0036574"/>
<dbReference type="eggNOG" id="KOG1968">
    <property type="taxonomic scope" value="Eukaryota"/>
</dbReference>
<dbReference type="GeneTree" id="ENSGT00940000153469"/>
<dbReference type="HOGENOM" id="CLU_269390_0_0_1"/>
<dbReference type="InParanoid" id="Q86BP6"/>
<dbReference type="OMA" id="QMYEESY"/>
<dbReference type="OrthoDB" id="9996895at2759"/>
<dbReference type="PhylomeDB" id="Q86BP6"/>
<dbReference type="BioGRID-ORCS" id="39770">
    <property type="hits" value="1 hit in 3 CRISPR screens"/>
</dbReference>
<dbReference type="GenomeRNAi" id="39770"/>
<dbReference type="PRO" id="PR:Q86BP6"/>
<dbReference type="Proteomes" id="UP000000803">
    <property type="component" value="Chromosome 3L"/>
</dbReference>
<dbReference type="Bgee" id="FBgn0036574">
    <property type="expression patterns" value="Expressed in egg cell and 57 other cell types or tissues"/>
</dbReference>
<dbReference type="ExpressionAtlas" id="Q86BP6">
    <property type="expression patterns" value="baseline and differential"/>
</dbReference>
<dbReference type="GO" id="GO:0031391">
    <property type="term" value="C:Elg1 RFC-like complex"/>
    <property type="evidence" value="ECO:0000314"/>
    <property type="project" value="FlyBase"/>
</dbReference>
<dbReference type="GO" id="GO:0005634">
    <property type="term" value="C:nucleus"/>
    <property type="evidence" value="ECO:0000318"/>
    <property type="project" value="GO_Central"/>
</dbReference>
<dbReference type="GO" id="GO:0005524">
    <property type="term" value="F:ATP binding"/>
    <property type="evidence" value="ECO:0007669"/>
    <property type="project" value="UniProtKB-KW"/>
</dbReference>
<dbReference type="GO" id="GO:0003677">
    <property type="term" value="F:DNA binding"/>
    <property type="evidence" value="ECO:0000318"/>
    <property type="project" value="GO_Central"/>
</dbReference>
<dbReference type="GO" id="GO:0061860">
    <property type="term" value="F:DNA clamp unloader activity"/>
    <property type="evidence" value="ECO:0000318"/>
    <property type="project" value="GO_Central"/>
</dbReference>
<dbReference type="GO" id="GO:0048477">
    <property type="term" value="P:oogenesis"/>
    <property type="evidence" value="ECO:0000315"/>
    <property type="project" value="FlyBase"/>
</dbReference>
<dbReference type="FunFam" id="3.40.50.300:FF:002496">
    <property type="entry name" value="Uncharacterized protein, isoform A"/>
    <property type="match status" value="1"/>
</dbReference>
<dbReference type="Gene3D" id="3.40.50.300">
    <property type="entry name" value="P-loop containing nucleotide triphosphate hydrolases"/>
    <property type="match status" value="1"/>
</dbReference>
<dbReference type="InterPro" id="IPR027417">
    <property type="entry name" value="P-loop_NTPase"/>
</dbReference>
<dbReference type="PANTHER" id="PTHR23389:SF21">
    <property type="entry name" value="ATPASE FAMILY AAA DOMAIN-CONTAINING PROTEIN 5"/>
    <property type="match status" value="1"/>
</dbReference>
<dbReference type="PANTHER" id="PTHR23389">
    <property type="entry name" value="CHROMOSOME TRANSMISSION FIDELITY FACTOR 18"/>
    <property type="match status" value="1"/>
</dbReference>
<dbReference type="SUPFAM" id="SSF52540">
    <property type="entry name" value="P-loop containing nucleoside triphosphate hydrolases"/>
    <property type="match status" value="1"/>
</dbReference>
<protein>
    <recommendedName>
        <fullName evidence="5">Enhanced level of genomic instability 1</fullName>
    </recommendedName>
</protein>
<organism evidence="8">
    <name type="scientific">Drosophila melanogaster</name>
    <name type="common">Fruit fly</name>
    <dbReference type="NCBI Taxonomy" id="7227"/>
    <lineage>
        <taxon>Eukaryota</taxon>
        <taxon>Metazoa</taxon>
        <taxon>Ecdysozoa</taxon>
        <taxon>Arthropoda</taxon>
        <taxon>Hexapoda</taxon>
        <taxon>Insecta</taxon>
        <taxon>Pterygota</taxon>
        <taxon>Neoptera</taxon>
        <taxon>Endopterygota</taxon>
        <taxon>Diptera</taxon>
        <taxon>Brachycera</taxon>
        <taxon>Muscomorpha</taxon>
        <taxon>Ephydroidea</taxon>
        <taxon>Drosophilidae</taxon>
        <taxon>Drosophila</taxon>
        <taxon>Sophophora</taxon>
    </lineage>
</organism>
<accession>Q86BP6</accession>
<accession>Q8MSZ2</accession>
<accession>Q9VUZ2</accession>